<protein>
    <recommendedName>
        <fullName evidence="1">Carbamoyl phosphate synthase large chain</fullName>
        <ecNumber evidence="1">6.3.4.16</ecNumber>
        <ecNumber evidence="1">6.3.5.5</ecNumber>
    </recommendedName>
    <alternativeName>
        <fullName evidence="1">Carbamoyl phosphate synthetase ammonia chain</fullName>
    </alternativeName>
</protein>
<proteinExistence type="inferred from homology"/>
<dbReference type="EC" id="6.3.4.16" evidence="1"/>
<dbReference type="EC" id="6.3.5.5" evidence="1"/>
<dbReference type="EMBL" id="CP001078">
    <property type="protein sequence ID" value="ACD52312.1"/>
    <property type="molecule type" value="Genomic_DNA"/>
</dbReference>
<dbReference type="RefSeq" id="WP_012450483.1">
    <property type="nucleotide sequence ID" value="NC_010723.1"/>
</dbReference>
<dbReference type="SMR" id="B2UX86"/>
<dbReference type="KEGG" id="cbt:CLH_0055"/>
<dbReference type="HOGENOM" id="CLU_000513_1_0_9"/>
<dbReference type="UniPathway" id="UPA00068">
    <property type="reaction ID" value="UER00171"/>
</dbReference>
<dbReference type="UniPathway" id="UPA00070">
    <property type="reaction ID" value="UER00115"/>
</dbReference>
<dbReference type="GO" id="GO:0005737">
    <property type="term" value="C:cytoplasm"/>
    <property type="evidence" value="ECO:0007669"/>
    <property type="project" value="TreeGrafter"/>
</dbReference>
<dbReference type="GO" id="GO:0005524">
    <property type="term" value="F:ATP binding"/>
    <property type="evidence" value="ECO:0007669"/>
    <property type="project" value="UniProtKB-UniRule"/>
</dbReference>
<dbReference type="GO" id="GO:0004087">
    <property type="term" value="F:carbamoyl-phosphate synthase (ammonia) activity"/>
    <property type="evidence" value="ECO:0007669"/>
    <property type="project" value="RHEA"/>
</dbReference>
<dbReference type="GO" id="GO:0004088">
    <property type="term" value="F:carbamoyl-phosphate synthase (glutamine-hydrolyzing) activity"/>
    <property type="evidence" value="ECO:0007669"/>
    <property type="project" value="UniProtKB-UniRule"/>
</dbReference>
<dbReference type="GO" id="GO:0046872">
    <property type="term" value="F:metal ion binding"/>
    <property type="evidence" value="ECO:0007669"/>
    <property type="project" value="UniProtKB-KW"/>
</dbReference>
<dbReference type="GO" id="GO:0044205">
    <property type="term" value="P:'de novo' UMP biosynthetic process"/>
    <property type="evidence" value="ECO:0007669"/>
    <property type="project" value="UniProtKB-UniRule"/>
</dbReference>
<dbReference type="GO" id="GO:0006541">
    <property type="term" value="P:glutamine metabolic process"/>
    <property type="evidence" value="ECO:0007669"/>
    <property type="project" value="TreeGrafter"/>
</dbReference>
<dbReference type="GO" id="GO:0006526">
    <property type="term" value="P:L-arginine biosynthetic process"/>
    <property type="evidence" value="ECO:0007669"/>
    <property type="project" value="UniProtKB-UniRule"/>
</dbReference>
<dbReference type="CDD" id="cd01424">
    <property type="entry name" value="MGS_CPS_II"/>
    <property type="match status" value="1"/>
</dbReference>
<dbReference type="FunFam" id="1.10.1030.10:FF:000002">
    <property type="entry name" value="Carbamoyl-phosphate synthase large chain"/>
    <property type="match status" value="1"/>
</dbReference>
<dbReference type="FunFam" id="3.30.470.20:FF:000001">
    <property type="entry name" value="Carbamoyl-phosphate synthase large chain"/>
    <property type="match status" value="1"/>
</dbReference>
<dbReference type="FunFam" id="3.30.470.20:FF:000026">
    <property type="entry name" value="Carbamoyl-phosphate synthase large chain"/>
    <property type="match status" value="1"/>
</dbReference>
<dbReference type="FunFam" id="3.40.50.20:FF:000001">
    <property type="entry name" value="Carbamoyl-phosphate synthase large chain"/>
    <property type="match status" value="1"/>
</dbReference>
<dbReference type="FunFam" id="3.40.50.20:FF:000002">
    <property type="entry name" value="Carbamoyl-phosphate synthase large chain"/>
    <property type="match status" value="1"/>
</dbReference>
<dbReference type="Gene3D" id="3.40.50.20">
    <property type="match status" value="2"/>
</dbReference>
<dbReference type="Gene3D" id="3.30.1490.20">
    <property type="entry name" value="ATP-grasp fold, A domain"/>
    <property type="match status" value="1"/>
</dbReference>
<dbReference type="Gene3D" id="3.30.470.20">
    <property type="entry name" value="ATP-grasp fold, B domain"/>
    <property type="match status" value="2"/>
</dbReference>
<dbReference type="Gene3D" id="1.10.1030.10">
    <property type="entry name" value="Carbamoyl-phosphate synthetase, large subunit oligomerisation domain"/>
    <property type="match status" value="1"/>
</dbReference>
<dbReference type="Gene3D" id="3.40.50.1380">
    <property type="entry name" value="Methylglyoxal synthase-like domain"/>
    <property type="match status" value="1"/>
</dbReference>
<dbReference type="HAMAP" id="MF_01210_A">
    <property type="entry name" value="CPSase_L_chain_A"/>
    <property type="match status" value="1"/>
</dbReference>
<dbReference type="HAMAP" id="MF_01210_B">
    <property type="entry name" value="CPSase_L_chain_B"/>
    <property type="match status" value="1"/>
</dbReference>
<dbReference type="InterPro" id="IPR011761">
    <property type="entry name" value="ATP-grasp"/>
</dbReference>
<dbReference type="InterPro" id="IPR013815">
    <property type="entry name" value="ATP_grasp_subdomain_1"/>
</dbReference>
<dbReference type="InterPro" id="IPR006275">
    <property type="entry name" value="CarbamoylP_synth_lsu"/>
</dbReference>
<dbReference type="InterPro" id="IPR005480">
    <property type="entry name" value="CarbamoylP_synth_lsu_oligo"/>
</dbReference>
<dbReference type="InterPro" id="IPR036897">
    <property type="entry name" value="CarbamoylP_synth_lsu_oligo_sf"/>
</dbReference>
<dbReference type="InterPro" id="IPR005479">
    <property type="entry name" value="CbamoylP_synth_lsu-like_ATP-bd"/>
</dbReference>
<dbReference type="InterPro" id="IPR005483">
    <property type="entry name" value="CbamoylP_synth_lsu_CPSase_dom"/>
</dbReference>
<dbReference type="InterPro" id="IPR011607">
    <property type="entry name" value="MGS-like_dom"/>
</dbReference>
<dbReference type="InterPro" id="IPR036914">
    <property type="entry name" value="MGS-like_dom_sf"/>
</dbReference>
<dbReference type="InterPro" id="IPR033937">
    <property type="entry name" value="MGS_CPS_CarB"/>
</dbReference>
<dbReference type="InterPro" id="IPR016185">
    <property type="entry name" value="PreATP-grasp_dom_sf"/>
</dbReference>
<dbReference type="NCBIfam" id="TIGR01369">
    <property type="entry name" value="CPSaseII_lrg"/>
    <property type="match status" value="1"/>
</dbReference>
<dbReference type="NCBIfam" id="NF003671">
    <property type="entry name" value="PRK05294.1"/>
    <property type="match status" value="1"/>
</dbReference>
<dbReference type="NCBIfam" id="NF009455">
    <property type="entry name" value="PRK12815.1"/>
    <property type="match status" value="1"/>
</dbReference>
<dbReference type="PANTHER" id="PTHR11405:SF53">
    <property type="entry name" value="CARBAMOYL-PHOSPHATE SYNTHASE [AMMONIA], MITOCHONDRIAL"/>
    <property type="match status" value="1"/>
</dbReference>
<dbReference type="PANTHER" id="PTHR11405">
    <property type="entry name" value="CARBAMOYLTRANSFERASE FAMILY MEMBER"/>
    <property type="match status" value="1"/>
</dbReference>
<dbReference type="Pfam" id="PF02786">
    <property type="entry name" value="CPSase_L_D2"/>
    <property type="match status" value="2"/>
</dbReference>
<dbReference type="Pfam" id="PF02787">
    <property type="entry name" value="CPSase_L_D3"/>
    <property type="match status" value="1"/>
</dbReference>
<dbReference type="Pfam" id="PF02142">
    <property type="entry name" value="MGS"/>
    <property type="match status" value="1"/>
</dbReference>
<dbReference type="PRINTS" id="PR00098">
    <property type="entry name" value="CPSASE"/>
</dbReference>
<dbReference type="SMART" id="SM01096">
    <property type="entry name" value="CPSase_L_D3"/>
    <property type="match status" value="1"/>
</dbReference>
<dbReference type="SMART" id="SM00851">
    <property type="entry name" value="MGS"/>
    <property type="match status" value="1"/>
</dbReference>
<dbReference type="SUPFAM" id="SSF48108">
    <property type="entry name" value="Carbamoyl phosphate synthetase, large subunit connection domain"/>
    <property type="match status" value="1"/>
</dbReference>
<dbReference type="SUPFAM" id="SSF56059">
    <property type="entry name" value="Glutathione synthetase ATP-binding domain-like"/>
    <property type="match status" value="2"/>
</dbReference>
<dbReference type="SUPFAM" id="SSF52335">
    <property type="entry name" value="Methylglyoxal synthase-like"/>
    <property type="match status" value="1"/>
</dbReference>
<dbReference type="SUPFAM" id="SSF52440">
    <property type="entry name" value="PreATP-grasp domain"/>
    <property type="match status" value="2"/>
</dbReference>
<dbReference type="PROSITE" id="PS50975">
    <property type="entry name" value="ATP_GRASP"/>
    <property type="match status" value="2"/>
</dbReference>
<dbReference type="PROSITE" id="PS00866">
    <property type="entry name" value="CPSASE_1"/>
    <property type="match status" value="2"/>
</dbReference>
<dbReference type="PROSITE" id="PS00867">
    <property type="entry name" value="CPSASE_2"/>
    <property type="match status" value="2"/>
</dbReference>
<dbReference type="PROSITE" id="PS51855">
    <property type="entry name" value="MGS"/>
    <property type="match status" value="1"/>
</dbReference>
<keyword id="KW-0028">Amino-acid biosynthesis</keyword>
<keyword id="KW-0055">Arginine biosynthesis</keyword>
<keyword id="KW-0067">ATP-binding</keyword>
<keyword id="KW-0436">Ligase</keyword>
<keyword id="KW-0460">Magnesium</keyword>
<keyword id="KW-0464">Manganese</keyword>
<keyword id="KW-0479">Metal-binding</keyword>
<keyword id="KW-0547">Nucleotide-binding</keyword>
<keyword id="KW-0665">Pyrimidine biosynthesis</keyword>
<keyword id="KW-0677">Repeat</keyword>
<evidence type="ECO:0000255" key="1">
    <source>
        <dbReference type="HAMAP-Rule" id="MF_01210"/>
    </source>
</evidence>
<feature type="chain" id="PRO_1000138886" description="Carbamoyl phosphate synthase large chain">
    <location>
        <begin position="1"/>
        <end position="1069"/>
    </location>
</feature>
<feature type="domain" description="ATP-grasp 1" evidence="1">
    <location>
        <begin position="133"/>
        <end position="327"/>
    </location>
</feature>
<feature type="domain" description="ATP-grasp 2" evidence="1">
    <location>
        <begin position="674"/>
        <end position="864"/>
    </location>
</feature>
<feature type="domain" description="MGS-like" evidence="1">
    <location>
        <begin position="932"/>
        <end position="1069"/>
    </location>
</feature>
<feature type="region of interest" description="Carboxyphosphate synthetic domain" evidence="1">
    <location>
        <begin position="1"/>
        <end position="401"/>
    </location>
</feature>
<feature type="region of interest" description="Oligomerization domain" evidence="1">
    <location>
        <begin position="402"/>
        <end position="549"/>
    </location>
</feature>
<feature type="region of interest" description="Carbamoyl phosphate synthetic domain" evidence="1">
    <location>
        <begin position="550"/>
        <end position="932"/>
    </location>
</feature>
<feature type="region of interest" description="Allosteric domain" evidence="1">
    <location>
        <begin position="933"/>
        <end position="1069"/>
    </location>
</feature>
<feature type="binding site" evidence="1">
    <location>
        <position position="129"/>
    </location>
    <ligand>
        <name>ATP</name>
        <dbReference type="ChEBI" id="CHEBI:30616"/>
        <label>1</label>
    </ligand>
</feature>
<feature type="binding site" evidence="1">
    <location>
        <position position="169"/>
    </location>
    <ligand>
        <name>ATP</name>
        <dbReference type="ChEBI" id="CHEBI:30616"/>
        <label>1</label>
    </ligand>
</feature>
<feature type="binding site" evidence="1">
    <location>
        <position position="175"/>
    </location>
    <ligand>
        <name>ATP</name>
        <dbReference type="ChEBI" id="CHEBI:30616"/>
        <label>1</label>
    </ligand>
</feature>
<feature type="binding site" evidence="1">
    <location>
        <position position="176"/>
    </location>
    <ligand>
        <name>ATP</name>
        <dbReference type="ChEBI" id="CHEBI:30616"/>
        <label>1</label>
    </ligand>
</feature>
<feature type="binding site" evidence="1">
    <location>
        <position position="208"/>
    </location>
    <ligand>
        <name>ATP</name>
        <dbReference type="ChEBI" id="CHEBI:30616"/>
        <label>1</label>
    </ligand>
</feature>
<feature type="binding site" evidence="1">
    <location>
        <position position="210"/>
    </location>
    <ligand>
        <name>ATP</name>
        <dbReference type="ChEBI" id="CHEBI:30616"/>
        <label>1</label>
    </ligand>
</feature>
<feature type="binding site" evidence="1">
    <location>
        <position position="215"/>
    </location>
    <ligand>
        <name>ATP</name>
        <dbReference type="ChEBI" id="CHEBI:30616"/>
        <label>1</label>
    </ligand>
</feature>
<feature type="binding site" evidence="1">
    <location>
        <position position="241"/>
    </location>
    <ligand>
        <name>ATP</name>
        <dbReference type="ChEBI" id="CHEBI:30616"/>
        <label>1</label>
    </ligand>
</feature>
<feature type="binding site" evidence="1">
    <location>
        <position position="242"/>
    </location>
    <ligand>
        <name>ATP</name>
        <dbReference type="ChEBI" id="CHEBI:30616"/>
        <label>1</label>
    </ligand>
</feature>
<feature type="binding site" evidence="1">
    <location>
        <position position="243"/>
    </location>
    <ligand>
        <name>ATP</name>
        <dbReference type="ChEBI" id="CHEBI:30616"/>
        <label>1</label>
    </ligand>
</feature>
<feature type="binding site" evidence="1">
    <location>
        <position position="284"/>
    </location>
    <ligand>
        <name>ATP</name>
        <dbReference type="ChEBI" id="CHEBI:30616"/>
        <label>1</label>
    </ligand>
</feature>
<feature type="binding site" evidence="1">
    <location>
        <position position="284"/>
    </location>
    <ligand>
        <name>Mg(2+)</name>
        <dbReference type="ChEBI" id="CHEBI:18420"/>
        <label>1</label>
    </ligand>
</feature>
<feature type="binding site" evidence="1">
    <location>
        <position position="284"/>
    </location>
    <ligand>
        <name>Mn(2+)</name>
        <dbReference type="ChEBI" id="CHEBI:29035"/>
        <label>1</label>
    </ligand>
</feature>
<feature type="binding site" evidence="1">
    <location>
        <position position="298"/>
    </location>
    <ligand>
        <name>ATP</name>
        <dbReference type="ChEBI" id="CHEBI:30616"/>
        <label>1</label>
    </ligand>
</feature>
<feature type="binding site" evidence="1">
    <location>
        <position position="298"/>
    </location>
    <ligand>
        <name>Mg(2+)</name>
        <dbReference type="ChEBI" id="CHEBI:18420"/>
        <label>1</label>
    </ligand>
</feature>
<feature type="binding site" evidence="1">
    <location>
        <position position="298"/>
    </location>
    <ligand>
        <name>Mg(2+)</name>
        <dbReference type="ChEBI" id="CHEBI:18420"/>
        <label>2</label>
    </ligand>
</feature>
<feature type="binding site" evidence="1">
    <location>
        <position position="298"/>
    </location>
    <ligand>
        <name>Mn(2+)</name>
        <dbReference type="ChEBI" id="CHEBI:29035"/>
        <label>1</label>
    </ligand>
</feature>
<feature type="binding site" evidence="1">
    <location>
        <position position="298"/>
    </location>
    <ligand>
        <name>Mn(2+)</name>
        <dbReference type="ChEBI" id="CHEBI:29035"/>
        <label>2</label>
    </ligand>
</feature>
<feature type="binding site" evidence="1">
    <location>
        <position position="300"/>
    </location>
    <ligand>
        <name>Mg(2+)</name>
        <dbReference type="ChEBI" id="CHEBI:18420"/>
        <label>2</label>
    </ligand>
</feature>
<feature type="binding site" evidence="1">
    <location>
        <position position="300"/>
    </location>
    <ligand>
        <name>Mn(2+)</name>
        <dbReference type="ChEBI" id="CHEBI:29035"/>
        <label>2</label>
    </ligand>
</feature>
<feature type="binding site" evidence="1">
    <location>
        <position position="710"/>
    </location>
    <ligand>
        <name>ATP</name>
        <dbReference type="ChEBI" id="CHEBI:30616"/>
        <label>2</label>
    </ligand>
</feature>
<feature type="binding site" evidence="1">
    <location>
        <position position="749"/>
    </location>
    <ligand>
        <name>ATP</name>
        <dbReference type="ChEBI" id="CHEBI:30616"/>
        <label>2</label>
    </ligand>
</feature>
<feature type="binding site" evidence="1">
    <location>
        <position position="751"/>
    </location>
    <ligand>
        <name>ATP</name>
        <dbReference type="ChEBI" id="CHEBI:30616"/>
        <label>2</label>
    </ligand>
</feature>
<feature type="binding site" evidence="1">
    <location>
        <position position="755"/>
    </location>
    <ligand>
        <name>ATP</name>
        <dbReference type="ChEBI" id="CHEBI:30616"/>
        <label>2</label>
    </ligand>
</feature>
<feature type="binding site" evidence="1">
    <location>
        <position position="780"/>
    </location>
    <ligand>
        <name>ATP</name>
        <dbReference type="ChEBI" id="CHEBI:30616"/>
        <label>2</label>
    </ligand>
</feature>
<feature type="binding site" evidence="1">
    <location>
        <position position="781"/>
    </location>
    <ligand>
        <name>ATP</name>
        <dbReference type="ChEBI" id="CHEBI:30616"/>
        <label>2</label>
    </ligand>
</feature>
<feature type="binding site" evidence="1">
    <location>
        <position position="782"/>
    </location>
    <ligand>
        <name>ATP</name>
        <dbReference type="ChEBI" id="CHEBI:30616"/>
        <label>2</label>
    </ligand>
</feature>
<feature type="binding site" evidence="1">
    <location>
        <position position="783"/>
    </location>
    <ligand>
        <name>ATP</name>
        <dbReference type="ChEBI" id="CHEBI:30616"/>
        <label>2</label>
    </ligand>
</feature>
<feature type="binding site" evidence="1">
    <location>
        <position position="823"/>
    </location>
    <ligand>
        <name>ATP</name>
        <dbReference type="ChEBI" id="CHEBI:30616"/>
        <label>2</label>
    </ligand>
</feature>
<feature type="binding site" evidence="1">
    <location>
        <position position="823"/>
    </location>
    <ligand>
        <name>Mg(2+)</name>
        <dbReference type="ChEBI" id="CHEBI:18420"/>
        <label>3</label>
    </ligand>
</feature>
<feature type="binding site" evidence="1">
    <location>
        <position position="823"/>
    </location>
    <ligand>
        <name>Mn(2+)</name>
        <dbReference type="ChEBI" id="CHEBI:29035"/>
        <label>3</label>
    </ligand>
</feature>
<feature type="binding site" evidence="1">
    <location>
        <position position="835"/>
    </location>
    <ligand>
        <name>ATP</name>
        <dbReference type="ChEBI" id="CHEBI:30616"/>
        <label>2</label>
    </ligand>
</feature>
<feature type="binding site" evidence="1">
    <location>
        <position position="835"/>
    </location>
    <ligand>
        <name>Mg(2+)</name>
        <dbReference type="ChEBI" id="CHEBI:18420"/>
        <label>3</label>
    </ligand>
</feature>
<feature type="binding site" evidence="1">
    <location>
        <position position="835"/>
    </location>
    <ligand>
        <name>Mg(2+)</name>
        <dbReference type="ChEBI" id="CHEBI:18420"/>
        <label>4</label>
    </ligand>
</feature>
<feature type="binding site" evidence="1">
    <location>
        <position position="835"/>
    </location>
    <ligand>
        <name>Mn(2+)</name>
        <dbReference type="ChEBI" id="CHEBI:29035"/>
        <label>3</label>
    </ligand>
</feature>
<feature type="binding site" evidence="1">
    <location>
        <position position="835"/>
    </location>
    <ligand>
        <name>Mn(2+)</name>
        <dbReference type="ChEBI" id="CHEBI:29035"/>
        <label>4</label>
    </ligand>
</feature>
<feature type="binding site" evidence="1">
    <location>
        <position position="837"/>
    </location>
    <ligand>
        <name>Mg(2+)</name>
        <dbReference type="ChEBI" id="CHEBI:18420"/>
        <label>4</label>
    </ligand>
</feature>
<feature type="binding site" evidence="1">
    <location>
        <position position="837"/>
    </location>
    <ligand>
        <name>Mn(2+)</name>
        <dbReference type="ChEBI" id="CHEBI:29035"/>
        <label>4</label>
    </ligand>
</feature>
<comment type="function">
    <text evidence="1">Large subunit of the glutamine-dependent carbamoyl phosphate synthetase (CPSase). CPSase catalyzes the formation of carbamoyl phosphate from the ammonia moiety of glutamine, carbonate, and phosphate donated by ATP, constituting the first step of 2 biosynthetic pathways, one leading to arginine and/or urea and the other to pyrimidine nucleotides. The large subunit (synthetase) binds the substrates ammonia (free or transferred from glutamine from the small subunit), hydrogencarbonate and ATP and carries out an ATP-coupled ligase reaction, activating hydrogencarbonate by forming carboxy phosphate which reacts with ammonia to form carbamoyl phosphate.</text>
</comment>
<comment type="catalytic activity">
    <reaction evidence="1">
        <text>hydrogencarbonate + L-glutamine + 2 ATP + H2O = carbamoyl phosphate + L-glutamate + 2 ADP + phosphate + 2 H(+)</text>
        <dbReference type="Rhea" id="RHEA:18633"/>
        <dbReference type="ChEBI" id="CHEBI:15377"/>
        <dbReference type="ChEBI" id="CHEBI:15378"/>
        <dbReference type="ChEBI" id="CHEBI:17544"/>
        <dbReference type="ChEBI" id="CHEBI:29985"/>
        <dbReference type="ChEBI" id="CHEBI:30616"/>
        <dbReference type="ChEBI" id="CHEBI:43474"/>
        <dbReference type="ChEBI" id="CHEBI:58228"/>
        <dbReference type="ChEBI" id="CHEBI:58359"/>
        <dbReference type="ChEBI" id="CHEBI:456216"/>
        <dbReference type="EC" id="6.3.5.5"/>
    </reaction>
</comment>
<comment type="catalytic activity">
    <molecule>Carbamoyl phosphate synthase large chain</molecule>
    <reaction evidence="1">
        <text>hydrogencarbonate + NH4(+) + 2 ATP = carbamoyl phosphate + 2 ADP + phosphate + 2 H(+)</text>
        <dbReference type="Rhea" id="RHEA:18029"/>
        <dbReference type="ChEBI" id="CHEBI:15378"/>
        <dbReference type="ChEBI" id="CHEBI:17544"/>
        <dbReference type="ChEBI" id="CHEBI:28938"/>
        <dbReference type="ChEBI" id="CHEBI:30616"/>
        <dbReference type="ChEBI" id="CHEBI:43474"/>
        <dbReference type="ChEBI" id="CHEBI:58228"/>
        <dbReference type="ChEBI" id="CHEBI:456216"/>
        <dbReference type="EC" id="6.3.4.16"/>
    </reaction>
</comment>
<comment type="cofactor">
    <cofactor evidence="1">
        <name>Mg(2+)</name>
        <dbReference type="ChEBI" id="CHEBI:18420"/>
    </cofactor>
    <cofactor evidence="1">
        <name>Mn(2+)</name>
        <dbReference type="ChEBI" id="CHEBI:29035"/>
    </cofactor>
    <text evidence="1">Binds 4 Mg(2+) or Mn(2+) ions per subunit.</text>
</comment>
<comment type="pathway">
    <text evidence="1">Amino-acid biosynthesis; L-arginine biosynthesis; carbamoyl phosphate from bicarbonate: step 1/1.</text>
</comment>
<comment type="pathway">
    <text evidence="1">Pyrimidine metabolism; UMP biosynthesis via de novo pathway; (S)-dihydroorotate from bicarbonate: step 1/3.</text>
</comment>
<comment type="subunit">
    <text evidence="1">Composed of two chains; the small (or glutamine) chain promotes the hydrolysis of glutamine to ammonia, which is used by the large (or ammonia) chain to synthesize carbamoyl phosphate. Tetramer of heterodimers (alpha,beta)4.</text>
</comment>
<comment type="domain">
    <text evidence="1">The large subunit is composed of 2 ATP-grasp domains that are involved in binding the 2 ATP molecules needed for carbamoyl phosphate synthesis. The N-terminal ATP-grasp domain (referred to as the carboxyphosphate synthetic component) catalyzes the ATP-dependent phosphorylation of hydrogencarbonate to carboxyphosphate and the subsequent nucleophilic attack by ammonia to form a carbamate intermediate. The C-terminal ATP-grasp domain (referred to as the carbamoyl phosphate synthetic component) then catalyzes the phosphorylation of carbamate with the second ATP to form the end product carbamoyl phosphate. The reactive and unstable enzyme intermediates are sequentially channeled from one active site to the next through the interior of the protein over a distance of at least 96 A.</text>
</comment>
<comment type="similarity">
    <text evidence="1">Belongs to the CarB family.</text>
</comment>
<organism>
    <name type="scientific">Clostridium botulinum (strain Alaska E43 / Type E3)</name>
    <dbReference type="NCBI Taxonomy" id="508767"/>
    <lineage>
        <taxon>Bacteria</taxon>
        <taxon>Bacillati</taxon>
        <taxon>Bacillota</taxon>
        <taxon>Clostridia</taxon>
        <taxon>Eubacteriales</taxon>
        <taxon>Clostridiaceae</taxon>
        <taxon>Clostridium</taxon>
    </lineage>
</organism>
<reference key="1">
    <citation type="submission" date="2008-05" db="EMBL/GenBank/DDBJ databases">
        <title>Complete genome sequence of Clostridium botulinum E3 str. Alaska E43.</title>
        <authorList>
            <person name="Brinkac L.M."/>
            <person name="Brown J.L."/>
            <person name="Bruce D."/>
            <person name="Detter C."/>
            <person name="Munk C."/>
            <person name="Smith L.A."/>
            <person name="Smith T.J."/>
            <person name="Sutton G."/>
            <person name="Brettin T.S."/>
        </authorList>
    </citation>
    <scope>NUCLEOTIDE SEQUENCE [LARGE SCALE GENOMIC DNA]</scope>
    <source>
        <strain>Alaska E43 / Type E3</strain>
    </source>
</reference>
<gene>
    <name evidence="1" type="primary">carB</name>
    <name type="ordered locus">CLH_0055</name>
</gene>
<name>CARB_CLOBA</name>
<sequence>MPLNKDIKRVLVIGSGPIVIGQAAEFDYSGTQACEALKSEGVEVVLINSNPATIMTDKEVADKVYLEPLTLEFIEKVIAKEKPDSLLAGMGGQTGLNLAVELHDAGILDKYNVKVIGTSIESIKEGEDRELFRDMMNRIGEPVIKSEIVTDLQAGIDFANKIGYPVIVRPAYTLGGSGGGIADDEEELRTILESGLQLSTIGQVLLEKSVKGWKEIEYEVMRDSYGNCITVCNMENIDPVGIHTGDSIVVAPSQTLSDKEYQMLRTASINIINAVGIEGGCNVQFSLNPNTFEYAVIEINPRVSRSSALASKATGYPIAKLAAKIALGYGLDEIKNAVTQKTYACFEPTLDYVVVKIPKWPFDKFFGADRQLGTKMMATGEIMAIGANFEQAFLKGIRSLEIGKYSLDHKKFKEHSMSELKDLVMKPDDERIFALAEMLRRDYMIERINKITGIDKFFLEKIKWIVEEEQRLKLSNIEDLDKEWLKNLKKKGFSDKAIADMLKVSPEDIYRLRDIWSIKPSYKMVDTCGGEFEALSPYYYSTYEQYDEVEVSNRRKVIVIGSGPIRIGQGIEFDYASVHCVKALKKLDIETIIVNNNPETVSTDFDISDKLYFEPLTEEDVLNIIEKENPYGVILQFGGQTAIKLANFLKEKNIKTLGTTADQIDMAEDREKFDELLERLDISRPKGKGIWSVEEGLEEAERLGFPVLVRPSYVIGGQGMEITHDEEELTFYLTNAFAKDKKNPILIDKYLMGREIEVDAISDGENILIPGIMEHLERAGVHSGDSVTMYPSQNVCDKIKGKILEYTKKLALAIGIKGMINIQFIEFEGSLYVIEVNPRASRTVPYISKVSGVPIVDIATQVMLGAKLNDLGYGVDIYKEPELISVKVPVFSTQKLPNVEVCLGPEMRSTGEVLGVGRTLKEALYKGFVGANMYPSKEKGKILATINKHNKAEFLPIAKDLAKVGYKFIATTGTCKLLRDEGIDAEEIRKIDEEKPNILDIVKNREVDLVVNTPTKGNDSKRDGFLIRRAAVERNLGVITALDTLRAIADVELEEFDKNKDLEVFDITK</sequence>
<accession>B2UX86</accession>